<accession>Q58177</accession>
<name>Y767_METJA</name>
<sequence>MVNVERISISFPKFLLKEIDEVVKKKGYSSRSELIRDAVRKYVLENNPLNKNETVSGIIIVVYNPTKEALEKMSKLYFEHNKVIKSLNQAYVTTSCGKNAKVEIFVVEGNSKDISKFYEEIEKINGKIYDKVIIF</sequence>
<comment type="similarity">
    <text evidence="1">Belongs to the transcriptional regulatory CopG/NikR family.</text>
</comment>
<feature type="chain" id="PRO_0000139319" description="Uncharacterized transcriptional regulator MJ0767">
    <location>
        <begin position="1"/>
        <end position="135"/>
    </location>
</feature>
<proteinExistence type="inferred from homology"/>
<organism>
    <name type="scientific">Methanocaldococcus jannaschii (strain ATCC 43067 / DSM 2661 / JAL-1 / JCM 10045 / NBRC 100440)</name>
    <name type="common">Methanococcus jannaschii</name>
    <dbReference type="NCBI Taxonomy" id="243232"/>
    <lineage>
        <taxon>Archaea</taxon>
        <taxon>Methanobacteriati</taxon>
        <taxon>Methanobacteriota</taxon>
        <taxon>Methanomada group</taxon>
        <taxon>Methanococci</taxon>
        <taxon>Methanococcales</taxon>
        <taxon>Methanocaldococcaceae</taxon>
        <taxon>Methanocaldococcus</taxon>
    </lineage>
</organism>
<protein>
    <recommendedName>
        <fullName>Uncharacterized transcriptional regulator MJ0767</fullName>
    </recommendedName>
</protein>
<gene>
    <name type="ordered locus">MJ0767</name>
</gene>
<keyword id="KW-0238">DNA-binding</keyword>
<keyword id="KW-1185">Reference proteome</keyword>
<keyword id="KW-0804">Transcription</keyword>
<keyword id="KW-0805">Transcription regulation</keyword>
<dbReference type="EMBL" id="L77117">
    <property type="protein sequence ID" value="AAB98762.1"/>
    <property type="molecule type" value="Genomic_DNA"/>
</dbReference>
<dbReference type="PIR" id="G64395">
    <property type="entry name" value="G64395"/>
</dbReference>
<dbReference type="RefSeq" id="WP_010870272.1">
    <property type="nucleotide sequence ID" value="NC_000909.1"/>
</dbReference>
<dbReference type="SMR" id="Q58177"/>
<dbReference type="STRING" id="243232.MJ_0767"/>
<dbReference type="PaxDb" id="243232-MJ_0767"/>
<dbReference type="EnsemblBacteria" id="AAB98762">
    <property type="protein sequence ID" value="AAB98762"/>
    <property type="gene ID" value="MJ_0767"/>
</dbReference>
<dbReference type="GeneID" id="1451644"/>
<dbReference type="KEGG" id="mja:MJ_0767"/>
<dbReference type="eggNOG" id="arCOG01008">
    <property type="taxonomic scope" value="Archaea"/>
</dbReference>
<dbReference type="HOGENOM" id="CLU_113319_1_2_2"/>
<dbReference type="InParanoid" id="Q58177"/>
<dbReference type="OrthoDB" id="25654at2157"/>
<dbReference type="PhylomeDB" id="Q58177"/>
<dbReference type="Proteomes" id="UP000000805">
    <property type="component" value="Chromosome"/>
</dbReference>
<dbReference type="GO" id="GO:0003677">
    <property type="term" value="F:DNA binding"/>
    <property type="evidence" value="ECO:0000318"/>
    <property type="project" value="GO_Central"/>
</dbReference>
<dbReference type="GO" id="GO:0006355">
    <property type="term" value="P:regulation of DNA-templated transcription"/>
    <property type="evidence" value="ECO:0000318"/>
    <property type="project" value="GO_Central"/>
</dbReference>
<dbReference type="CDD" id="cd22231">
    <property type="entry name" value="RHH_NikR_HicB-like"/>
    <property type="match status" value="1"/>
</dbReference>
<dbReference type="Gene3D" id="3.30.70.1150">
    <property type="entry name" value="ACT-like. Chain A, domain 2"/>
    <property type="match status" value="1"/>
</dbReference>
<dbReference type="Gene3D" id="1.10.1220.10">
    <property type="entry name" value="Met repressor-like"/>
    <property type="match status" value="1"/>
</dbReference>
<dbReference type="InterPro" id="IPR027271">
    <property type="entry name" value="Acetolactate_synth/TF_NikR_C"/>
</dbReference>
<dbReference type="InterPro" id="IPR045865">
    <property type="entry name" value="ACT-like_dom_sf"/>
</dbReference>
<dbReference type="InterPro" id="IPR013321">
    <property type="entry name" value="Arc_rbn_hlx_hlx"/>
</dbReference>
<dbReference type="InterPro" id="IPR002145">
    <property type="entry name" value="CopG"/>
</dbReference>
<dbReference type="InterPro" id="IPR050192">
    <property type="entry name" value="CopG/NikR_regulator"/>
</dbReference>
<dbReference type="InterPro" id="IPR010985">
    <property type="entry name" value="Ribbon_hlx_hlx"/>
</dbReference>
<dbReference type="InterPro" id="IPR014864">
    <property type="entry name" value="TF_NikR_Ni-bd_C"/>
</dbReference>
<dbReference type="PANTHER" id="PTHR34719">
    <property type="entry name" value="NICKEL-RESPONSIVE REGULATOR"/>
    <property type="match status" value="1"/>
</dbReference>
<dbReference type="PANTHER" id="PTHR34719:SF2">
    <property type="entry name" value="NICKEL-RESPONSIVE REGULATOR"/>
    <property type="match status" value="1"/>
</dbReference>
<dbReference type="Pfam" id="PF08753">
    <property type="entry name" value="NikR_C"/>
    <property type="match status" value="1"/>
</dbReference>
<dbReference type="Pfam" id="PF01402">
    <property type="entry name" value="RHH_1"/>
    <property type="match status" value="1"/>
</dbReference>
<dbReference type="SUPFAM" id="SSF55021">
    <property type="entry name" value="ACT-like"/>
    <property type="match status" value="1"/>
</dbReference>
<dbReference type="SUPFAM" id="SSF47598">
    <property type="entry name" value="Ribbon-helix-helix"/>
    <property type="match status" value="1"/>
</dbReference>
<evidence type="ECO:0000305" key="1"/>
<reference key="1">
    <citation type="journal article" date="1996" name="Science">
        <title>Complete genome sequence of the methanogenic archaeon, Methanococcus jannaschii.</title>
        <authorList>
            <person name="Bult C.J."/>
            <person name="White O."/>
            <person name="Olsen G.J."/>
            <person name="Zhou L."/>
            <person name="Fleischmann R.D."/>
            <person name="Sutton G.G."/>
            <person name="Blake J.A."/>
            <person name="FitzGerald L.M."/>
            <person name="Clayton R.A."/>
            <person name="Gocayne J.D."/>
            <person name="Kerlavage A.R."/>
            <person name="Dougherty B.A."/>
            <person name="Tomb J.-F."/>
            <person name="Adams M.D."/>
            <person name="Reich C.I."/>
            <person name="Overbeek R."/>
            <person name="Kirkness E.F."/>
            <person name="Weinstock K.G."/>
            <person name="Merrick J.M."/>
            <person name="Glodek A."/>
            <person name="Scott J.L."/>
            <person name="Geoghagen N.S.M."/>
            <person name="Weidman J.F."/>
            <person name="Fuhrmann J.L."/>
            <person name="Nguyen D."/>
            <person name="Utterback T.R."/>
            <person name="Kelley J.M."/>
            <person name="Peterson J.D."/>
            <person name="Sadow P.W."/>
            <person name="Hanna M.C."/>
            <person name="Cotton M.D."/>
            <person name="Roberts K.M."/>
            <person name="Hurst M.A."/>
            <person name="Kaine B.P."/>
            <person name="Borodovsky M."/>
            <person name="Klenk H.-P."/>
            <person name="Fraser C.M."/>
            <person name="Smith H.O."/>
            <person name="Woese C.R."/>
            <person name="Venter J.C."/>
        </authorList>
    </citation>
    <scope>NUCLEOTIDE SEQUENCE [LARGE SCALE GENOMIC DNA]</scope>
    <source>
        <strain>ATCC 43067 / DSM 2661 / JAL-1 / JCM 10045 / NBRC 100440</strain>
    </source>
</reference>